<proteinExistence type="inferred from homology"/>
<gene>
    <name evidence="1" type="primary">pheS</name>
    <name type="ordered locus">CPS_2996</name>
</gene>
<protein>
    <recommendedName>
        <fullName evidence="1">Phenylalanine--tRNA ligase alpha subunit</fullName>
        <ecNumber evidence="1">6.1.1.20</ecNumber>
    </recommendedName>
    <alternativeName>
        <fullName evidence="1">Phenylalanyl-tRNA synthetase alpha subunit</fullName>
        <shortName evidence="1">PheRS</shortName>
    </alternativeName>
</protein>
<accession>Q47ZS4</accession>
<sequence length="331" mass="37570">MNLDTTTIDSIVAQAEVAIAQASDPTALDQVRVNFLGKKGLFTEQMKGLGKLPKEEKPKMGQVINIAKQAVQKLLTERGELLRAQEIKEKLAAESIDVTLPGRGTQIGGLHPVTRTIARIESFFGDLGFEVKDGPEVEDDYHNFDALNIPEHHPARQDHDTFYFNPKLVLRTQTSGVQIRTMEVEQPPLRIISPGKVYRNDYDQTHTPMFHQVEGLMVDKDVSFTHLKGILHDFLHHFFEEEVEIRFRPSYFPFTEPSAEVDIMGKNGKWLEVLGCGMVHPNVLRSVGIDPEVYTGFAFGMGVERLTMLRYGVNDLRAFFENDLRFLKQFK</sequence>
<name>SYFA_COLP3</name>
<comment type="catalytic activity">
    <reaction evidence="1">
        <text>tRNA(Phe) + L-phenylalanine + ATP = L-phenylalanyl-tRNA(Phe) + AMP + diphosphate + H(+)</text>
        <dbReference type="Rhea" id="RHEA:19413"/>
        <dbReference type="Rhea" id="RHEA-COMP:9668"/>
        <dbReference type="Rhea" id="RHEA-COMP:9699"/>
        <dbReference type="ChEBI" id="CHEBI:15378"/>
        <dbReference type="ChEBI" id="CHEBI:30616"/>
        <dbReference type="ChEBI" id="CHEBI:33019"/>
        <dbReference type="ChEBI" id="CHEBI:58095"/>
        <dbReference type="ChEBI" id="CHEBI:78442"/>
        <dbReference type="ChEBI" id="CHEBI:78531"/>
        <dbReference type="ChEBI" id="CHEBI:456215"/>
        <dbReference type="EC" id="6.1.1.20"/>
    </reaction>
</comment>
<comment type="cofactor">
    <cofactor evidence="1">
        <name>Mg(2+)</name>
        <dbReference type="ChEBI" id="CHEBI:18420"/>
    </cofactor>
    <text evidence="1">Binds 2 magnesium ions per tetramer.</text>
</comment>
<comment type="subunit">
    <text evidence="1">Tetramer of two alpha and two beta subunits.</text>
</comment>
<comment type="subcellular location">
    <subcellularLocation>
        <location evidence="1">Cytoplasm</location>
    </subcellularLocation>
</comment>
<comment type="similarity">
    <text evidence="1">Belongs to the class-II aminoacyl-tRNA synthetase family. Phe-tRNA synthetase alpha subunit type 1 subfamily.</text>
</comment>
<evidence type="ECO:0000255" key="1">
    <source>
        <dbReference type="HAMAP-Rule" id="MF_00281"/>
    </source>
</evidence>
<organism>
    <name type="scientific">Colwellia psychrerythraea (strain 34H / ATCC BAA-681)</name>
    <name type="common">Vibrio psychroerythus</name>
    <dbReference type="NCBI Taxonomy" id="167879"/>
    <lineage>
        <taxon>Bacteria</taxon>
        <taxon>Pseudomonadati</taxon>
        <taxon>Pseudomonadota</taxon>
        <taxon>Gammaproteobacteria</taxon>
        <taxon>Alteromonadales</taxon>
        <taxon>Colwelliaceae</taxon>
        <taxon>Colwellia</taxon>
    </lineage>
</organism>
<reference key="1">
    <citation type="journal article" date="2005" name="Proc. Natl. Acad. Sci. U.S.A.">
        <title>The psychrophilic lifestyle as revealed by the genome sequence of Colwellia psychrerythraea 34H through genomic and proteomic analyses.</title>
        <authorList>
            <person name="Methe B.A."/>
            <person name="Nelson K.E."/>
            <person name="Deming J.W."/>
            <person name="Momen B."/>
            <person name="Melamud E."/>
            <person name="Zhang X."/>
            <person name="Moult J."/>
            <person name="Madupu R."/>
            <person name="Nelson W.C."/>
            <person name="Dodson R.J."/>
            <person name="Brinkac L.M."/>
            <person name="Daugherty S.C."/>
            <person name="Durkin A.S."/>
            <person name="DeBoy R.T."/>
            <person name="Kolonay J.F."/>
            <person name="Sullivan S.A."/>
            <person name="Zhou L."/>
            <person name="Davidsen T.M."/>
            <person name="Wu M."/>
            <person name="Huston A.L."/>
            <person name="Lewis M."/>
            <person name="Weaver B."/>
            <person name="Weidman J.F."/>
            <person name="Khouri H."/>
            <person name="Utterback T.R."/>
            <person name="Feldblyum T.V."/>
            <person name="Fraser C.M."/>
        </authorList>
    </citation>
    <scope>NUCLEOTIDE SEQUENCE [LARGE SCALE GENOMIC DNA]</scope>
    <source>
        <strain>34H / ATCC BAA-681</strain>
    </source>
</reference>
<dbReference type="EC" id="6.1.1.20" evidence="1"/>
<dbReference type="EMBL" id="CP000083">
    <property type="protein sequence ID" value="AAZ28375.1"/>
    <property type="molecule type" value="Genomic_DNA"/>
</dbReference>
<dbReference type="RefSeq" id="WP_011043784.1">
    <property type="nucleotide sequence ID" value="NC_003910.7"/>
</dbReference>
<dbReference type="SMR" id="Q47ZS4"/>
<dbReference type="STRING" id="167879.CPS_2996"/>
<dbReference type="KEGG" id="cps:CPS_2996"/>
<dbReference type="eggNOG" id="COG0016">
    <property type="taxonomic scope" value="Bacteria"/>
</dbReference>
<dbReference type="HOGENOM" id="CLU_025086_0_1_6"/>
<dbReference type="Proteomes" id="UP000000547">
    <property type="component" value="Chromosome"/>
</dbReference>
<dbReference type="GO" id="GO:0005737">
    <property type="term" value="C:cytoplasm"/>
    <property type="evidence" value="ECO:0007669"/>
    <property type="project" value="UniProtKB-SubCell"/>
</dbReference>
<dbReference type="GO" id="GO:0005524">
    <property type="term" value="F:ATP binding"/>
    <property type="evidence" value="ECO:0007669"/>
    <property type="project" value="UniProtKB-UniRule"/>
</dbReference>
<dbReference type="GO" id="GO:0000287">
    <property type="term" value="F:magnesium ion binding"/>
    <property type="evidence" value="ECO:0007669"/>
    <property type="project" value="UniProtKB-UniRule"/>
</dbReference>
<dbReference type="GO" id="GO:0004826">
    <property type="term" value="F:phenylalanine-tRNA ligase activity"/>
    <property type="evidence" value="ECO:0007669"/>
    <property type="project" value="UniProtKB-UniRule"/>
</dbReference>
<dbReference type="GO" id="GO:0000049">
    <property type="term" value="F:tRNA binding"/>
    <property type="evidence" value="ECO:0007669"/>
    <property type="project" value="InterPro"/>
</dbReference>
<dbReference type="GO" id="GO:0006432">
    <property type="term" value="P:phenylalanyl-tRNA aminoacylation"/>
    <property type="evidence" value="ECO:0007669"/>
    <property type="project" value="UniProtKB-UniRule"/>
</dbReference>
<dbReference type="CDD" id="cd00496">
    <property type="entry name" value="PheRS_alpha_core"/>
    <property type="match status" value="1"/>
</dbReference>
<dbReference type="FunFam" id="3.30.930.10:FF:000003">
    <property type="entry name" value="Phenylalanine--tRNA ligase alpha subunit"/>
    <property type="match status" value="1"/>
</dbReference>
<dbReference type="Gene3D" id="3.30.930.10">
    <property type="entry name" value="Bira Bifunctional Protein, Domain 2"/>
    <property type="match status" value="1"/>
</dbReference>
<dbReference type="HAMAP" id="MF_00281">
    <property type="entry name" value="Phe_tRNA_synth_alpha1"/>
    <property type="match status" value="1"/>
</dbReference>
<dbReference type="InterPro" id="IPR006195">
    <property type="entry name" value="aa-tRNA-synth_II"/>
</dbReference>
<dbReference type="InterPro" id="IPR045864">
    <property type="entry name" value="aa-tRNA-synth_II/BPL/LPL"/>
</dbReference>
<dbReference type="InterPro" id="IPR004529">
    <property type="entry name" value="Phe-tRNA-synth_IIc_asu"/>
</dbReference>
<dbReference type="InterPro" id="IPR004188">
    <property type="entry name" value="Phe-tRNA_ligase_II_N"/>
</dbReference>
<dbReference type="InterPro" id="IPR022911">
    <property type="entry name" value="Phe_tRNA_ligase_alpha1_bac"/>
</dbReference>
<dbReference type="InterPro" id="IPR002319">
    <property type="entry name" value="Phenylalanyl-tRNA_Synthase"/>
</dbReference>
<dbReference type="InterPro" id="IPR010978">
    <property type="entry name" value="tRNA-bd_arm"/>
</dbReference>
<dbReference type="NCBIfam" id="TIGR00468">
    <property type="entry name" value="pheS"/>
    <property type="match status" value="1"/>
</dbReference>
<dbReference type="PANTHER" id="PTHR11538:SF41">
    <property type="entry name" value="PHENYLALANINE--TRNA LIGASE, MITOCHONDRIAL"/>
    <property type="match status" value="1"/>
</dbReference>
<dbReference type="PANTHER" id="PTHR11538">
    <property type="entry name" value="PHENYLALANYL-TRNA SYNTHETASE"/>
    <property type="match status" value="1"/>
</dbReference>
<dbReference type="Pfam" id="PF02912">
    <property type="entry name" value="Phe_tRNA-synt_N"/>
    <property type="match status" value="1"/>
</dbReference>
<dbReference type="Pfam" id="PF01409">
    <property type="entry name" value="tRNA-synt_2d"/>
    <property type="match status" value="1"/>
</dbReference>
<dbReference type="SUPFAM" id="SSF55681">
    <property type="entry name" value="Class II aaRS and biotin synthetases"/>
    <property type="match status" value="1"/>
</dbReference>
<dbReference type="SUPFAM" id="SSF46589">
    <property type="entry name" value="tRNA-binding arm"/>
    <property type="match status" value="1"/>
</dbReference>
<dbReference type="PROSITE" id="PS50862">
    <property type="entry name" value="AA_TRNA_LIGASE_II"/>
    <property type="match status" value="1"/>
</dbReference>
<keyword id="KW-0030">Aminoacyl-tRNA synthetase</keyword>
<keyword id="KW-0067">ATP-binding</keyword>
<keyword id="KW-0963">Cytoplasm</keyword>
<keyword id="KW-0436">Ligase</keyword>
<keyword id="KW-0460">Magnesium</keyword>
<keyword id="KW-0479">Metal-binding</keyword>
<keyword id="KW-0547">Nucleotide-binding</keyword>
<keyword id="KW-0648">Protein biosynthesis</keyword>
<feature type="chain" id="PRO_0000231975" description="Phenylalanine--tRNA ligase alpha subunit">
    <location>
        <begin position="1"/>
        <end position="331"/>
    </location>
</feature>
<feature type="binding site" evidence="1">
    <location>
        <position position="256"/>
    </location>
    <ligand>
        <name>Mg(2+)</name>
        <dbReference type="ChEBI" id="CHEBI:18420"/>
        <note>shared with beta subunit</note>
    </ligand>
</feature>